<proteinExistence type="inferred from homology"/>
<gene>
    <name evidence="1" type="primary">ftsB</name>
    <name type="ordered locus">SBO_2772</name>
</gene>
<feature type="chain" id="PRO_1000025727" description="Cell division protein FtsB">
    <location>
        <begin position="1"/>
        <end position="103"/>
    </location>
</feature>
<feature type="topological domain" description="Cytoplasmic" evidence="1">
    <location>
        <begin position="1"/>
        <end position="3"/>
    </location>
</feature>
<feature type="transmembrane region" description="Helical" evidence="1">
    <location>
        <begin position="4"/>
        <end position="21"/>
    </location>
</feature>
<feature type="topological domain" description="Periplasmic" evidence="1">
    <location>
        <begin position="22"/>
        <end position="103"/>
    </location>
</feature>
<feature type="coiled-coil region" evidence="1">
    <location>
        <begin position="31"/>
        <end position="71"/>
    </location>
</feature>
<reference key="1">
    <citation type="journal article" date="2005" name="Nucleic Acids Res.">
        <title>Genome dynamics and diversity of Shigella species, the etiologic agents of bacillary dysentery.</title>
        <authorList>
            <person name="Yang F."/>
            <person name="Yang J."/>
            <person name="Zhang X."/>
            <person name="Chen L."/>
            <person name="Jiang Y."/>
            <person name="Yan Y."/>
            <person name="Tang X."/>
            <person name="Wang J."/>
            <person name="Xiong Z."/>
            <person name="Dong J."/>
            <person name="Xue Y."/>
            <person name="Zhu Y."/>
            <person name="Xu X."/>
            <person name="Sun L."/>
            <person name="Chen S."/>
            <person name="Nie H."/>
            <person name="Peng J."/>
            <person name="Xu J."/>
            <person name="Wang Y."/>
            <person name="Yuan Z."/>
            <person name="Wen Y."/>
            <person name="Yao Z."/>
            <person name="Shen Y."/>
            <person name="Qiang B."/>
            <person name="Hou Y."/>
            <person name="Yu J."/>
            <person name="Jin Q."/>
        </authorList>
    </citation>
    <scope>NUCLEOTIDE SEQUENCE [LARGE SCALE GENOMIC DNA]</scope>
    <source>
        <strain>Sb227</strain>
    </source>
</reference>
<protein>
    <recommendedName>
        <fullName evidence="1">Cell division protein FtsB</fullName>
    </recommendedName>
</protein>
<organism>
    <name type="scientific">Shigella boydii serotype 4 (strain Sb227)</name>
    <dbReference type="NCBI Taxonomy" id="300268"/>
    <lineage>
        <taxon>Bacteria</taxon>
        <taxon>Pseudomonadati</taxon>
        <taxon>Pseudomonadota</taxon>
        <taxon>Gammaproteobacteria</taxon>
        <taxon>Enterobacterales</taxon>
        <taxon>Enterobacteriaceae</taxon>
        <taxon>Shigella</taxon>
    </lineage>
</organism>
<evidence type="ECO:0000255" key="1">
    <source>
        <dbReference type="HAMAP-Rule" id="MF_00599"/>
    </source>
</evidence>
<comment type="function">
    <text evidence="1">Essential cell division protein. May link together the upstream cell division proteins, which are predominantly cytoplasmic, with the downstream cell division proteins, which are predominantly periplasmic.</text>
</comment>
<comment type="subunit">
    <text evidence="1">Part of a complex composed of FtsB, FtsL and FtsQ.</text>
</comment>
<comment type="subcellular location">
    <subcellularLocation>
        <location evidence="1">Cell inner membrane</location>
        <topology evidence="1">Single-pass type II membrane protein</topology>
    </subcellularLocation>
    <text evidence="1">Localizes to the division septum.</text>
</comment>
<comment type="similarity">
    <text evidence="1">Belongs to the FtsB family.</text>
</comment>
<dbReference type="EMBL" id="CP000036">
    <property type="protein sequence ID" value="ABB67298.1"/>
    <property type="molecule type" value="Genomic_DNA"/>
</dbReference>
<dbReference type="RefSeq" id="WP_000517476.1">
    <property type="nucleotide sequence ID" value="NC_007613.1"/>
</dbReference>
<dbReference type="SMR" id="Q31XB0"/>
<dbReference type="GeneID" id="93779258"/>
<dbReference type="KEGG" id="sbo:SBO_2772"/>
<dbReference type="HOGENOM" id="CLU_134863_5_2_6"/>
<dbReference type="Proteomes" id="UP000007067">
    <property type="component" value="Chromosome"/>
</dbReference>
<dbReference type="GO" id="GO:0032153">
    <property type="term" value="C:cell division site"/>
    <property type="evidence" value="ECO:0007669"/>
    <property type="project" value="UniProtKB-UniRule"/>
</dbReference>
<dbReference type="GO" id="GO:0030428">
    <property type="term" value="C:cell septum"/>
    <property type="evidence" value="ECO:0007669"/>
    <property type="project" value="TreeGrafter"/>
</dbReference>
<dbReference type="GO" id="GO:0005886">
    <property type="term" value="C:plasma membrane"/>
    <property type="evidence" value="ECO:0007669"/>
    <property type="project" value="UniProtKB-SubCell"/>
</dbReference>
<dbReference type="GO" id="GO:0043093">
    <property type="term" value="P:FtsZ-dependent cytokinesis"/>
    <property type="evidence" value="ECO:0007669"/>
    <property type="project" value="UniProtKB-UniRule"/>
</dbReference>
<dbReference type="FunFam" id="1.20.5.400:FF:000001">
    <property type="entry name" value="Cell division protein FtsB"/>
    <property type="match status" value="1"/>
</dbReference>
<dbReference type="Gene3D" id="1.20.5.400">
    <property type="match status" value="1"/>
</dbReference>
<dbReference type="HAMAP" id="MF_00599">
    <property type="entry name" value="FtsB"/>
    <property type="match status" value="1"/>
</dbReference>
<dbReference type="InterPro" id="IPR023081">
    <property type="entry name" value="Cell_div_FtsB"/>
</dbReference>
<dbReference type="InterPro" id="IPR007060">
    <property type="entry name" value="FtsL/DivIC"/>
</dbReference>
<dbReference type="NCBIfam" id="NF002058">
    <property type="entry name" value="PRK00888.1"/>
    <property type="match status" value="1"/>
</dbReference>
<dbReference type="PANTHER" id="PTHR37485">
    <property type="entry name" value="CELL DIVISION PROTEIN FTSB"/>
    <property type="match status" value="1"/>
</dbReference>
<dbReference type="PANTHER" id="PTHR37485:SF1">
    <property type="entry name" value="CELL DIVISION PROTEIN FTSB"/>
    <property type="match status" value="1"/>
</dbReference>
<dbReference type="Pfam" id="PF04977">
    <property type="entry name" value="DivIC"/>
    <property type="match status" value="1"/>
</dbReference>
<accession>Q31XB0</accession>
<sequence length="103" mass="11622">MGKLTLLLLAILVWLQYSLWFGKNGIHDYTRVNDDVAAQQATNAKLKARNDQLFAEIDDLNGGQEALEERARNELSMTRPGETFYRLVPDASKRAQSAGQNNR</sequence>
<keyword id="KW-0131">Cell cycle</keyword>
<keyword id="KW-0132">Cell division</keyword>
<keyword id="KW-0997">Cell inner membrane</keyword>
<keyword id="KW-1003">Cell membrane</keyword>
<keyword id="KW-0175">Coiled coil</keyword>
<keyword id="KW-0472">Membrane</keyword>
<keyword id="KW-0812">Transmembrane</keyword>
<keyword id="KW-1133">Transmembrane helix</keyword>
<name>FTSB_SHIBS</name>